<gene>
    <name evidence="1" type="primary">coaA</name>
    <name type="ordered locus">MGAS2096_Spy1004</name>
</gene>
<evidence type="ECO:0000255" key="1">
    <source>
        <dbReference type="HAMAP-Rule" id="MF_00215"/>
    </source>
</evidence>
<sequence>MSNEFINFEKISRESWKTLHQKAKALLTQEELKSITSLNDNISINDVIDIYLPLINLIQVYKIAQENLSFSKSLFLKKDIQLRPFIIGISGSVAVGKSTTSRLLQLLLSRTHPNSQVELVTTDGFLYPNQFLIEQGLLNRKGFPESYNMELLLDFLDSIKNGQTAFAPVYSHDIYDIIPNQKQSFNNPDFLIVEGINVFQNQQNNRLYMSDYFDFSIYIDADSSHIETWYIERFLSILKLAKCDPHNYYAQYAQLPRSEAIAFARNVWKTVNLENLEKFIEPTRNRAELILHKSADHKIDEIYLKK</sequence>
<feature type="chain" id="PRO_1000099955" description="Pantothenate kinase">
    <location>
        <begin position="1"/>
        <end position="306"/>
    </location>
</feature>
<feature type="binding site" evidence="1">
    <location>
        <begin position="91"/>
        <end position="98"/>
    </location>
    <ligand>
        <name>ATP</name>
        <dbReference type="ChEBI" id="CHEBI:30616"/>
    </ligand>
</feature>
<comment type="catalytic activity">
    <reaction evidence="1">
        <text>(R)-pantothenate + ATP = (R)-4'-phosphopantothenate + ADP + H(+)</text>
        <dbReference type="Rhea" id="RHEA:16373"/>
        <dbReference type="ChEBI" id="CHEBI:10986"/>
        <dbReference type="ChEBI" id="CHEBI:15378"/>
        <dbReference type="ChEBI" id="CHEBI:29032"/>
        <dbReference type="ChEBI" id="CHEBI:30616"/>
        <dbReference type="ChEBI" id="CHEBI:456216"/>
        <dbReference type="EC" id="2.7.1.33"/>
    </reaction>
</comment>
<comment type="pathway">
    <text evidence="1">Cofactor biosynthesis; coenzyme A biosynthesis; CoA from (R)-pantothenate: step 1/5.</text>
</comment>
<comment type="subcellular location">
    <subcellularLocation>
        <location evidence="1">Cytoplasm</location>
    </subcellularLocation>
</comment>
<comment type="similarity">
    <text evidence="1">Belongs to the prokaryotic pantothenate kinase family.</text>
</comment>
<protein>
    <recommendedName>
        <fullName evidence="1">Pantothenate kinase</fullName>
        <ecNumber evidence="1">2.7.1.33</ecNumber>
    </recommendedName>
    <alternativeName>
        <fullName evidence="1">Pantothenic acid kinase</fullName>
    </alternativeName>
</protein>
<name>COAA_STRPB</name>
<proteinExistence type="inferred from homology"/>
<accession>Q1JBK2</accession>
<reference key="1">
    <citation type="journal article" date="2006" name="Proc. Natl. Acad. Sci. U.S.A.">
        <title>Molecular genetic anatomy of inter- and intraserotype variation in the human bacterial pathogen group A Streptococcus.</title>
        <authorList>
            <person name="Beres S.B."/>
            <person name="Richter E.W."/>
            <person name="Nagiec M.J."/>
            <person name="Sumby P."/>
            <person name="Porcella S.F."/>
            <person name="DeLeo F.R."/>
            <person name="Musser J.M."/>
        </authorList>
    </citation>
    <scope>NUCLEOTIDE SEQUENCE [LARGE SCALE GENOMIC DNA]</scope>
    <source>
        <strain>MGAS2096</strain>
    </source>
</reference>
<organism>
    <name type="scientific">Streptococcus pyogenes serotype M12 (strain MGAS2096)</name>
    <dbReference type="NCBI Taxonomy" id="370553"/>
    <lineage>
        <taxon>Bacteria</taxon>
        <taxon>Bacillati</taxon>
        <taxon>Bacillota</taxon>
        <taxon>Bacilli</taxon>
        <taxon>Lactobacillales</taxon>
        <taxon>Streptococcaceae</taxon>
        <taxon>Streptococcus</taxon>
    </lineage>
</organism>
<dbReference type="EC" id="2.7.1.33" evidence="1"/>
<dbReference type="EMBL" id="CP000261">
    <property type="protein sequence ID" value="ABF36056.1"/>
    <property type="molecule type" value="Genomic_DNA"/>
</dbReference>
<dbReference type="SMR" id="Q1JBK2"/>
<dbReference type="KEGG" id="spj:MGAS2096_Spy1004"/>
<dbReference type="HOGENOM" id="CLU_053818_1_1_9"/>
<dbReference type="UniPathway" id="UPA00241">
    <property type="reaction ID" value="UER00352"/>
</dbReference>
<dbReference type="GO" id="GO:0005737">
    <property type="term" value="C:cytoplasm"/>
    <property type="evidence" value="ECO:0007669"/>
    <property type="project" value="UniProtKB-SubCell"/>
</dbReference>
<dbReference type="GO" id="GO:0005524">
    <property type="term" value="F:ATP binding"/>
    <property type="evidence" value="ECO:0007669"/>
    <property type="project" value="UniProtKB-UniRule"/>
</dbReference>
<dbReference type="GO" id="GO:0004594">
    <property type="term" value="F:pantothenate kinase activity"/>
    <property type="evidence" value="ECO:0007669"/>
    <property type="project" value="UniProtKB-UniRule"/>
</dbReference>
<dbReference type="GO" id="GO:0015937">
    <property type="term" value="P:coenzyme A biosynthetic process"/>
    <property type="evidence" value="ECO:0007669"/>
    <property type="project" value="UniProtKB-UniRule"/>
</dbReference>
<dbReference type="CDD" id="cd02025">
    <property type="entry name" value="PanK"/>
    <property type="match status" value="1"/>
</dbReference>
<dbReference type="Gene3D" id="3.40.50.300">
    <property type="entry name" value="P-loop containing nucleotide triphosphate hydrolases"/>
    <property type="match status" value="1"/>
</dbReference>
<dbReference type="HAMAP" id="MF_00215">
    <property type="entry name" value="Pantothen_kinase_1"/>
    <property type="match status" value="1"/>
</dbReference>
<dbReference type="InterPro" id="IPR027417">
    <property type="entry name" value="P-loop_NTPase"/>
</dbReference>
<dbReference type="InterPro" id="IPR004566">
    <property type="entry name" value="PanK"/>
</dbReference>
<dbReference type="InterPro" id="IPR006083">
    <property type="entry name" value="PRK/URK"/>
</dbReference>
<dbReference type="NCBIfam" id="TIGR00554">
    <property type="entry name" value="panK_bact"/>
    <property type="match status" value="1"/>
</dbReference>
<dbReference type="PANTHER" id="PTHR10285">
    <property type="entry name" value="URIDINE KINASE"/>
    <property type="match status" value="1"/>
</dbReference>
<dbReference type="Pfam" id="PF00485">
    <property type="entry name" value="PRK"/>
    <property type="match status" value="1"/>
</dbReference>
<dbReference type="PIRSF" id="PIRSF000545">
    <property type="entry name" value="Pantothenate_kin"/>
    <property type="match status" value="1"/>
</dbReference>
<dbReference type="SUPFAM" id="SSF52540">
    <property type="entry name" value="P-loop containing nucleoside triphosphate hydrolases"/>
    <property type="match status" value="1"/>
</dbReference>
<keyword id="KW-0067">ATP-binding</keyword>
<keyword id="KW-0173">Coenzyme A biosynthesis</keyword>
<keyword id="KW-0963">Cytoplasm</keyword>
<keyword id="KW-0418">Kinase</keyword>
<keyword id="KW-0547">Nucleotide-binding</keyword>
<keyword id="KW-0808">Transferase</keyword>